<accession>Q9IQ47</accession>
<comment type="function">
    <text evidence="2">Plays an essential role in viral RNA transcription and replication by forming the heterotrimeric polymerase complex together with PB1 and PB2 subunits. The complex transcribes viral mRNAs by using a unique mechanism called cap-snatching. It consists in the hijacking and cleavage of host capped pre-mRNAs. These short capped RNAs are then used as primers for viral mRNAs. The PB2 subunit is responsible for the binding of the 5' cap of cellular pre-mRNAs which are subsequently cleaved after 10-13 nucleotides by the PA subunit that carries the endonuclease activity.</text>
</comment>
<comment type="cofactor">
    <cofactor evidence="2">
        <name>Mn(2+)</name>
        <dbReference type="ChEBI" id="CHEBI:29035"/>
    </cofactor>
    <text evidence="2">Binds 2 manganese ions per subunit.</text>
</comment>
<comment type="subunit">
    <text evidence="1 2">Influenza RNA polymerase is composed of three subunits: PB1, PB2 and PA. Interacts (via C-terminus) with PB1 (via N-terminus).</text>
</comment>
<comment type="subcellular location">
    <subcellularLocation>
        <location evidence="2">Host cytoplasm</location>
    </subcellularLocation>
    <subcellularLocation>
        <location evidence="2">Host nucleus</location>
    </subcellularLocation>
    <text evidence="1 2">PB1 and PA are transported in the host nucleus as a complex.</text>
</comment>
<comment type="alternative products">
    <event type="ribosomal frameshifting"/>
    <isoform>
        <id>Q9IQ47-1</id>
        <name>PA</name>
        <sequence type="displayed"/>
    </isoform>
    <isoform>
        <id>P0DJW9-1</id>
        <name>PA-X</name>
        <sequence type="external"/>
    </isoform>
</comment>
<comment type="PTM">
    <text evidence="1 2">Phosphorylated on serines and threonines by host kinases, including human casein kinase II.</text>
</comment>
<comment type="similarity">
    <text evidence="2">Belongs to the influenza viruses PA family.</text>
</comment>
<protein>
    <recommendedName>
        <fullName evidence="2">Polymerase acidic protein</fullName>
        <ecNumber evidence="2">3.1.-.-</ecNumber>
    </recommendedName>
    <alternativeName>
        <fullName evidence="2">RNA-directed RNA polymerase subunit P2</fullName>
    </alternativeName>
</protein>
<sequence length="716" mass="82561">MEDFVRQCFNPMIVELAEKTMKEYGEDLKIETNKFAAICTHLEVCFMYSDFHFINEQGESIIVELGDPSALLKHRFEIIEGRDRTMAWTVVNSICNTTGAEKPKFLPDLYDYKENRFIEIGVTRREVHIYYLEKANKIKSEKTHIHIFSFTGEEMATKADYTLDEESRARIKTRLFTIRQEMASRGLWDSFRQSERGEETIEERFEITGTMRKLADQSLPPNFSSLENFRAYVDGFEPNGYIEGKLSQMSKEVNARIEPFLKTTPRPLRLPNGPPCSQRSKFLLMDALKLSIEDPSHEGEGIPLYDAIKCMRTFFGWKEPNVVKPHEKGINPNYLLSWKQVLAELQDIENEEKIPKTKNMKKTSQLKWALGENMAPEKVDFDDCKDVGDLKQYDSDEPELRSLASWIQNEFNKACELTDSSWIELDEIGEDVAPIEHIASMRRNYFTSEVSHCRATEYIMKGVYINTALLNASCAAMDDFQLIPMISKCRTKEGRRKTNLYGFIIKGRSHLRNDTDVVNFVSMEFSLTDPRLEPHKWEKYCVLEIGDMLIRSAIGQVSRPMFLYVRTNGTSKIKMKWGMEMRRCLLQSLQQIESMIEAESSVKEKDMTKEFFENKSETWPIGESPKGVEESSIGKVCRTLLAKSVFNSLYASPQLEGFSAESRKLLLIVQALRDNLEPGTFDLGGLYEAIEECLINDPWVLLNASWFNSFLTHALS</sequence>
<feature type="chain" id="PRO_0000279268" description="Polymerase acidic protein">
    <location>
        <begin position="1"/>
        <end position="716"/>
    </location>
</feature>
<feature type="short sequence motif" description="Nuclear localization signal 1 (NLS1)" evidence="1 2">
    <location>
        <begin position="124"/>
        <end position="139"/>
    </location>
</feature>
<feature type="short sequence motif" description="Nuclear localization signal 2 (NLS2)" evidence="1 2">
    <location>
        <begin position="184"/>
        <end position="247"/>
    </location>
</feature>
<feature type="binding site" evidence="2">
    <location>
        <position position="41"/>
    </location>
    <ligand>
        <name>Mn(2+)</name>
        <dbReference type="ChEBI" id="CHEBI:29035"/>
        <label>1</label>
    </ligand>
</feature>
<feature type="binding site" evidence="2">
    <location>
        <position position="80"/>
    </location>
    <ligand>
        <name>Mn(2+)</name>
        <dbReference type="ChEBI" id="CHEBI:29035"/>
        <label>2</label>
    </ligand>
</feature>
<feature type="binding site" evidence="2">
    <location>
        <position position="108"/>
    </location>
    <ligand>
        <name>Mn(2+)</name>
        <dbReference type="ChEBI" id="CHEBI:29035"/>
        <label>1</label>
    </ligand>
</feature>
<feature type="binding site" evidence="2">
    <location>
        <position position="108"/>
    </location>
    <ligand>
        <name>Mn(2+)</name>
        <dbReference type="ChEBI" id="CHEBI:29035"/>
        <label>2</label>
    </ligand>
</feature>
<feature type="binding site" evidence="2">
    <location>
        <position position="119"/>
    </location>
    <ligand>
        <name>Mn(2+)</name>
        <dbReference type="ChEBI" id="CHEBI:29035"/>
        <label>1</label>
    </ligand>
</feature>
<feature type="binding site" evidence="2">
    <location>
        <position position="120"/>
    </location>
    <ligand>
        <name>Mn(2+)</name>
        <dbReference type="ChEBI" id="CHEBI:29035"/>
        <label>1</label>
    </ligand>
</feature>
<organismHost>
    <name type="scientific">Aves</name>
    <dbReference type="NCBI Taxonomy" id="8782"/>
</organismHost>
<organismHost>
    <name type="scientific">Cetacea</name>
    <name type="common">whales</name>
    <dbReference type="NCBI Taxonomy" id="9721"/>
</organismHost>
<organismHost>
    <name type="scientific">Homo sapiens</name>
    <name type="common">Human</name>
    <dbReference type="NCBI Taxonomy" id="9606"/>
</organismHost>
<organismHost>
    <name type="scientific">Phocidae</name>
    <name type="common">true seals</name>
    <dbReference type="NCBI Taxonomy" id="9709"/>
</organismHost>
<organismHost>
    <name type="scientific">Sus scrofa</name>
    <name type="common">Pig</name>
    <dbReference type="NCBI Taxonomy" id="9823"/>
</organismHost>
<proteinExistence type="inferred from homology"/>
<organism>
    <name type="scientific">Influenza A virus (strain A/X-31 H3N2)</name>
    <dbReference type="NCBI Taxonomy" id="132504"/>
    <lineage>
        <taxon>Viruses</taxon>
        <taxon>Riboviria</taxon>
        <taxon>Orthornavirae</taxon>
        <taxon>Negarnaviricota</taxon>
        <taxon>Polyploviricotina</taxon>
        <taxon>Insthoviricetes</taxon>
        <taxon>Articulavirales</taxon>
        <taxon>Orthomyxoviridae</taxon>
        <taxon>Alphainfluenzavirus</taxon>
        <taxon>Alphainfluenzavirus influenzae</taxon>
        <taxon>Influenza A virus</taxon>
    </lineage>
</organism>
<dbReference type="EC" id="3.1.-.-" evidence="2"/>
<dbReference type="EMBL" id="AB036780">
    <property type="protein sequence ID" value="BAA99401.1"/>
    <property type="molecule type" value="Genomic_RNA"/>
</dbReference>
<dbReference type="SMR" id="Q9IQ47"/>
<dbReference type="BindingDB" id="Q9IQ47"/>
<dbReference type="ChEMBL" id="CHEMBL3621021"/>
<dbReference type="MEROPS" id="S62.001"/>
<dbReference type="GO" id="GO:0030430">
    <property type="term" value="C:host cell cytoplasm"/>
    <property type="evidence" value="ECO:0007669"/>
    <property type="project" value="UniProtKB-SubCell"/>
</dbReference>
<dbReference type="GO" id="GO:0042025">
    <property type="term" value="C:host cell nucleus"/>
    <property type="evidence" value="ECO:0007669"/>
    <property type="project" value="UniProtKB-SubCell"/>
</dbReference>
<dbReference type="GO" id="GO:0004519">
    <property type="term" value="F:endonuclease activity"/>
    <property type="evidence" value="ECO:0007669"/>
    <property type="project" value="UniProtKB-KW"/>
</dbReference>
<dbReference type="GO" id="GO:0046872">
    <property type="term" value="F:metal ion binding"/>
    <property type="evidence" value="ECO:0007669"/>
    <property type="project" value="UniProtKB-KW"/>
</dbReference>
<dbReference type="GO" id="GO:0003723">
    <property type="term" value="F:RNA binding"/>
    <property type="evidence" value="ECO:0007669"/>
    <property type="project" value="UniProtKB-UniRule"/>
</dbReference>
<dbReference type="GO" id="GO:0075526">
    <property type="term" value="P:cap snatching"/>
    <property type="evidence" value="ECO:0007669"/>
    <property type="project" value="UniProtKB-UniRule"/>
</dbReference>
<dbReference type="GO" id="GO:0006351">
    <property type="term" value="P:DNA-templated transcription"/>
    <property type="evidence" value="ECO:0007669"/>
    <property type="project" value="UniProtKB-UniRule"/>
</dbReference>
<dbReference type="GO" id="GO:0039657">
    <property type="term" value="P:symbiont-mediated suppression of host gene expression"/>
    <property type="evidence" value="ECO:0007669"/>
    <property type="project" value="UniProtKB-KW"/>
</dbReference>
<dbReference type="GO" id="GO:0039523">
    <property type="term" value="P:symbiont-mediated suppression of host mRNA transcription via inhibition of RNA polymerase II activity"/>
    <property type="evidence" value="ECO:0007669"/>
    <property type="project" value="UniProtKB-UniRule"/>
</dbReference>
<dbReference type="GO" id="GO:0039694">
    <property type="term" value="P:viral RNA genome replication"/>
    <property type="evidence" value="ECO:0007669"/>
    <property type="project" value="InterPro"/>
</dbReference>
<dbReference type="GO" id="GO:0075523">
    <property type="term" value="P:viral translational frameshifting"/>
    <property type="evidence" value="ECO:0007669"/>
    <property type="project" value="UniProtKB-KW"/>
</dbReference>
<dbReference type="FunFam" id="3.40.91.90:FF:000001">
    <property type="entry name" value="Polymerase acidic protein"/>
    <property type="match status" value="1"/>
</dbReference>
<dbReference type="Gene3D" id="3.40.91.90">
    <property type="entry name" value="Influenza RNA-dependent RNA polymerase subunit PA, endonuclease domain"/>
    <property type="match status" value="1"/>
</dbReference>
<dbReference type="HAMAP" id="MF_04063">
    <property type="entry name" value="INFV_PA"/>
    <property type="match status" value="1"/>
</dbReference>
<dbReference type="InterPro" id="IPR037534">
    <property type="entry name" value="INFV_PA"/>
</dbReference>
<dbReference type="InterPro" id="IPR001009">
    <property type="entry name" value="PA/PA-X"/>
</dbReference>
<dbReference type="InterPro" id="IPR038372">
    <property type="entry name" value="PA/PA-X_sf"/>
</dbReference>
<dbReference type="Pfam" id="PF00603">
    <property type="entry name" value="Flu_PA"/>
    <property type="match status" value="1"/>
</dbReference>
<keyword id="KW-1157">Cap snatching</keyword>
<keyword id="KW-0255">Endonuclease</keyword>
<keyword id="KW-1262">Eukaryotic host gene expression shutoff by virus</keyword>
<keyword id="KW-1191">Eukaryotic host transcription shutoff by virus</keyword>
<keyword id="KW-1035">Host cytoplasm</keyword>
<keyword id="KW-1190">Host gene expression shutoff by virus</keyword>
<keyword id="KW-1048">Host nucleus</keyword>
<keyword id="KW-0945">Host-virus interaction</keyword>
<keyword id="KW-0378">Hydrolase</keyword>
<keyword id="KW-1104">Inhibition of host RNA polymerase II by virus</keyword>
<keyword id="KW-0464">Manganese</keyword>
<keyword id="KW-0479">Metal-binding</keyword>
<keyword id="KW-0540">Nuclease</keyword>
<keyword id="KW-0597">Phosphoprotein</keyword>
<keyword id="KW-0688">Ribosomal frameshifting</keyword>
<evidence type="ECO:0000250" key="1">
    <source>
        <dbReference type="UniProtKB" id="P03433"/>
    </source>
</evidence>
<evidence type="ECO:0000255" key="2">
    <source>
        <dbReference type="HAMAP-Rule" id="MF_04063"/>
    </source>
</evidence>
<reference key="1">
    <citation type="submission" date="2000-01" db="EMBL/GenBank/DDBJ databases">
        <authorList>
            <person name="Seong B."/>
            <person name="Lee K."/>
        </authorList>
    </citation>
    <scope>NUCLEOTIDE SEQUENCE [GENOMIC RNA]</scope>
</reference>
<name>PA_I000X</name>
<gene>
    <name evidence="2" type="primary">PA</name>
</gene>